<organism>
    <name type="scientific">Homo sapiens</name>
    <name type="common">Human</name>
    <dbReference type="NCBI Taxonomy" id="9606"/>
    <lineage>
        <taxon>Eukaryota</taxon>
        <taxon>Metazoa</taxon>
        <taxon>Chordata</taxon>
        <taxon>Craniata</taxon>
        <taxon>Vertebrata</taxon>
        <taxon>Euteleostomi</taxon>
        <taxon>Mammalia</taxon>
        <taxon>Eutheria</taxon>
        <taxon>Euarchontoglires</taxon>
        <taxon>Primates</taxon>
        <taxon>Haplorrhini</taxon>
        <taxon>Catarrhini</taxon>
        <taxon>Hominidae</taxon>
        <taxon>Homo</taxon>
    </lineage>
</organism>
<gene>
    <name type="primary">CATR1</name>
</gene>
<sequence>MVLNEEIPRHLLLTQNNDIIPKHHILILPAVDSYQKSVNDLRALTFSKFQELKHAHELRNLCVSQSRFLAIMWFGTNTN</sequence>
<name>CATR1_HUMAN</name>
<protein>
    <recommendedName>
        <fullName>CATR tumorigenic conversion 1 protein</fullName>
    </recommendedName>
    <alternativeName>
        <fullName>CATR1.3</fullName>
    </alternativeName>
</protein>
<accession>Q13166</accession>
<comment type="developmental stage">
    <text>Associated with tumorigenic conversion.</text>
</comment>
<reference key="1">
    <citation type="journal article" date="1995" name="Proc. Natl. Acad. Sci. U.S.A.">
        <title>Cloning and sequencing of CATR1.3, a human gene associated with tumorigenic conversion.</title>
        <authorList>
            <person name="Li D."/>
            <person name="Noyes I."/>
            <person name="Shuler C."/>
            <person name="Milo G.E."/>
        </authorList>
    </citation>
    <scope>NUCLEOTIDE SEQUENCE [MRNA]</scope>
    <source>
        <tissue>Carcinoma</tissue>
    </source>
</reference>
<feature type="chain" id="PRO_0000089337" description="CATR tumorigenic conversion 1 protein">
    <location>
        <begin position="1"/>
        <end position="79"/>
    </location>
</feature>
<proteinExistence type="evidence at transcript level"/>
<keyword id="KW-1185">Reference proteome</keyword>
<dbReference type="EMBL" id="U25433">
    <property type="status" value="NOT_ANNOTATED_CDS"/>
    <property type="molecule type" value="mRNA"/>
</dbReference>
<dbReference type="PIR" id="I38991">
    <property type="entry name" value="I38991"/>
</dbReference>
<dbReference type="BioMuta" id="HGNC:1525"/>
<dbReference type="AGR" id="HGNC:1525"/>
<dbReference type="GeneCards" id="CATR1"/>
<dbReference type="HGNC" id="HGNC:1525">
    <property type="gene designation" value="CATR1"/>
</dbReference>
<dbReference type="MIM" id="600676">
    <property type="type" value="gene"/>
</dbReference>
<dbReference type="neXtProt" id="NX_Q13166"/>
<dbReference type="InParanoid" id="Q13166"/>
<dbReference type="PAN-GO" id="Q13166">
    <property type="GO annotations" value="0 GO annotations based on evolutionary models"/>
</dbReference>
<dbReference type="Pharos" id="Q13166">
    <property type="development level" value="Tdark"/>
</dbReference>
<dbReference type="PRO" id="PR:Q13166"/>
<dbReference type="Proteomes" id="UP000005640">
    <property type="component" value="Unplaced"/>
</dbReference>
<dbReference type="RNAct" id="Q13166">
    <property type="molecule type" value="protein"/>
</dbReference>